<organism>
    <name type="scientific">Marchantia paleacea</name>
    <name type="common">Liverwort</name>
    <dbReference type="NCBI Taxonomy" id="56867"/>
    <lineage>
        <taxon>Eukaryota</taxon>
        <taxon>Viridiplantae</taxon>
        <taxon>Streptophyta</taxon>
        <taxon>Embryophyta</taxon>
        <taxon>Marchantiophyta</taxon>
        <taxon>Marchantiopsida</taxon>
        <taxon>Marchantiidae</taxon>
        <taxon>Marchantiales</taxon>
        <taxon>Marchantiaceae</taxon>
        <taxon>Marchantia</taxon>
    </lineage>
</organism>
<proteinExistence type="evidence at transcript level"/>
<protein>
    <recommendedName>
        <fullName>Protochlorophyllide reductase, chloroplastic</fullName>
        <shortName>PCR</shortName>
        <ecNumber>1.3.1.33</ecNumber>
    </recommendedName>
    <alternativeName>
        <fullName>NADPH-protochlorophyllide oxidoreductase</fullName>
        <shortName>POR</shortName>
    </alternativeName>
</protein>
<keyword id="KW-0149">Chlorophyll biosynthesis</keyword>
<keyword id="KW-0150">Chloroplast</keyword>
<keyword id="KW-0521">NADP</keyword>
<keyword id="KW-0560">Oxidoreductase</keyword>
<keyword id="KW-0602">Photosynthesis</keyword>
<keyword id="KW-0934">Plastid</keyword>
<keyword id="KW-0809">Transit peptide</keyword>
<comment type="function">
    <text>Phototransformation of protochlorophyllide (Pchlide) to chlorophyllide (Chlide).</text>
</comment>
<comment type="catalytic activity">
    <reaction>
        <text>chlorophyllide a + NADP(+) = protochlorophyllide a + NADPH + H(+)</text>
        <dbReference type="Rhea" id="RHEA:11132"/>
        <dbReference type="ChEBI" id="CHEBI:15378"/>
        <dbReference type="ChEBI" id="CHEBI:57783"/>
        <dbReference type="ChEBI" id="CHEBI:58349"/>
        <dbReference type="ChEBI" id="CHEBI:83348"/>
        <dbReference type="ChEBI" id="CHEBI:83350"/>
        <dbReference type="EC" id="1.3.1.33"/>
    </reaction>
</comment>
<comment type="pathway">
    <text>Porphyrin-containing compound metabolism; chlorophyll biosynthesis.</text>
</comment>
<comment type="subcellular location">
    <subcellularLocation>
        <location>Plastid</location>
        <location>Chloroplast</location>
    </subcellularLocation>
</comment>
<comment type="similarity">
    <text evidence="2">Belongs to the short-chain dehydrogenases/reductases (SDR) family. POR subfamily.</text>
</comment>
<reference key="1">
    <citation type="journal article" date="1998" name="Plant Cell Physiol.">
        <title>Light-dependent expression of protochlorophyllide oxidoreductase gene in the liverwort, Marchantia paleacea var. diptera.</title>
        <authorList>
            <person name="Takio S."/>
            <person name="Nakao N."/>
            <person name="Suzuki T."/>
            <person name="Tanaka K."/>
            <person name="Yamamoto I."/>
            <person name="Satoh T."/>
        </authorList>
    </citation>
    <scope>NUCLEOTIDE SEQUENCE [MRNA]</scope>
    <source>
        <strain>var. diptera</strain>
        <tissue>Callus</tissue>
    </source>
</reference>
<feature type="transit peptide" description="Chloroplast" evidence="1">
    <location>
        <begin position="1"/>
        <end status="unknown"/>
    </location>
</feature>
<feature type="chain" id="PRO_0000023295" description="Protochlorophyllide reductase, chloroplastic">
    <location>
        <begin status="unknown"/>
        <end position="458"/>
    </location>
</feature>
<evidence type="ECO:0000255" key="1"/>
<evidence type="ECO:0000305" key="2"/>
<dbReference type="EC" id="1.3.1.33"/>
<dbReference type="EMBL" id="AB007321">
    <property type="protein sequence ID" value="BAA31693.1"/>
    <property type="molecule type" value="mRNA"/>
</dbReference>
<dbReference type="SMR" id="O80333"/>
<dbReference type="BRENDA" id="1.3.1.33">
    <property type="organism ID" value="3181"/>
</dbReference>
<dbReference type="UniPathway" id="UPA00668"/>
<dbReference type="GO" id="GO:0009507">
    <property type="term" value="C:chloroplast"/>
    <property type="evidence" value="ECO:0007669"/>
    <property type="project" value="UniProtKB-SubCell"/>
</dbReference>
<dbReference type="GO" id="GO:0016630">
    <property type="term" value="F:protochlorophyllide reductase activity"/>
    <property type="evidence" value="ECO:0007669"/>
    <property type="project" value="UniProtKB-EC"/>
</dbReference>
<dbReference type="GO" id="GO:0015995">
    <property type="term" value="P:chlorophyll biosynthetic process"/>
    <property type="evidence" value="ECO:0007669"/>
    <property type="project" value="UniProtKB-UniPathway"/>
</dbReference>
<dbReference type="GO" id="GO:0015979">
    <property type="term" value="P:photosynthesis"/>
    <property type="evidence" value="ECO:0007669"/>
    <property type="project" value="UniProtKB-KW"/>
</dbReference>
<dbReference type="CDD" id="cd09810">
    <property type="entry name" value="LPOR_like_SDR_c_like"/>
    <property type="match status" value="1"/>
</dbReference>
<dbReference type="Gene3D" id="3.40.50.720">
    <property type="entry name" value="NAD(P)-binding Rossmann-like Domain"/>
    <property type="match status" value="1"/>
</dbReference>
<dbReference type="InterPro" id="IPR036291">
    <property type="entry name" value="NAD(P)-bd_dom_sf"/>
</dbReference>
<dbReference type="InterPro" id="IPR005979">
    <property type="entry name" value="Prochl_reduct"/>
</dbReference>
<dbReference type="InterPro" id="IPR002347">
    <property type="entry name" value="SDR_fam"/>
</dbReference>
<dbReference type="NCBIfam" id="TIGR01289">
    <property type="entry name" value="LPOR"/>
    <property type="match status" value="1"/>
</dbReference>
<dbReference type="PANTHER" id="PTHR44419:SF19">
    <property type="entry name" value="PROTOCHLOROPHYLLIDE REDUCTASE A, CHLOROPLASTIC"/>
    <property type="match status" value="1"/>
</dbReference>
<dbReference type="PANTHER" id="PTHR44419">
    <property type="entry name" value="PROTOCHLOROPHYLLIDE REDUCTASE C, CHLOROPLASTIC"/>
    <property type="match status" value="1"/>
</dbReference>
<dbReference type="Pfam" id="PF00106">
    <property type="entry name" value="adh_short"/>
    <property type="match status" value="1"/>
</dbReference>
<dbReference type="PRINTS" id="PR00081">
    <property type="entry name" value="GDHRDH"/>
</dbReference>
<dbReference type="SUPFAM" id="SSF51735">
    <property type="entry name" value="NAD(P)-binding Rossmann-fold domains"/>
    <property type="match status" value="1"/>
</dbReference>
<name>POR_MARPA</name>
<sequence>MPKRSNGSLVVRCAVSVVRFSKENVSCDLASENFTFSRDSFPVVSTVLRVSEAVYRMAAVASLGSALSVSSAALSQNVSVSNNATKESAFLGLRMGEVAKFGGALLSVSTVAANLKSKPGVLSVNAVTAPAETMNKPSSKKTATKSTCIITGASSGLGLATAKALADTGEWHVIMACRDFLKAERAARSVGIPKDSYTVIHCDLASFDSVRAFVDNFRRTERQLDVLVCNAAVYFPTDKEPKFSAEGFELSVGTNHMGHFLLARLLMEDLQKAKDSLKRMIIVGSITGNSNTVAGNVPPKANLGHLRGLAGGLNGVNSSSMIDGGEFDGAKAYKDSKVCNMFTMQEFHRRYHAETGITFSSLYPGCIAETGLFRNHVTLFRTLFPPFQKYITKGYVSEEEAGKRMAQVVSDPKLSKSGVYWSWNKDSGSFENELSEEASNPEKAKRLWELSERLSGLV</sequence>
<accession>O80333</accession>
<gene>
    <name type="primary">PORA</name>
</gene>